<evidence type="ECO:0000250" key="1">
    <source>
        <dbReference type="UniProtKB" id="P10518"/>
    </source>
</evidence>
<evidence type="ECO:0000250" key="2">
    <source>
        <dbReference type="UniProtKB" id="P13716"/>
    </source>
</evidence>
<evidence type="ECO:0000305" key="3"/>
<dbReference type="EC" id="4.2.1.24"/>
<dbReference type="EMBL" id="BT021592">
    <property type="protein sequence ID" value="AAX46439.1"/>
    <property type="molecule type" value="mRNA"/>
</dbReference>
<dbReference type="RefSeq" id="NP_001014895.1">
    <property type="nucleotide sequence ID" value="NM_001014895.1"/>
</dbReference>
<dbReference type="SMR" id="Q58DK5"/>
<dbReference type="FunCoup" id="Q58DK5">
    <property type="interactions" value="2092"/>
</dbReference>
<dbReference type="STRING" id="9913.ENSBTAP00000000315"/>
<dbReference type="PaxDb" id="9913-ENSBTAP00000000315"/>
<dbReference type="PeptideAtlas" id="Q58DK5"/>
<dbReference type="Ensembl" id="ENSBTAT00000000315.5">
    <property type="protein sequence ID" value="ENSBTAP00000000315.4"/>
    <property type="gene ID" value="ENSBTAG00000000251.6"/>
</dbReference>
<dbReference type="GeneID" id="510679"/>
<dbReference type="KEGG" id="bta:510679"/>
<dbReference type="CTD" id="210"/>
<dbReference type="VEuPathDB" id="HostDB:ENSBTAG00000000251"/>
<dbReference type="VGNC" id="VGNC:25802">
    <property type="gene designation" value="ALAD"/>
</dbReference>
<dbReference type="eggNOG" id="KOG2794">
    <property type="taxonomic scope" value="Eukaryota"/>
</dbReference>
<dbReference type="GeneTree" id="ENSGT00390000006998"/>
<dbReference type="HOGENOM" id="CLU_035731_0_1_1"/>
<dbReference type="InParanoid" id="Q58DK5"/>
<dbReference type="OMA" id="YQMDYAN"/>
<dbReference type="OrthoDB" id="1530at2759"/>
<dbReference type="TreeFam" id="TF300665"/>
<dbReference type="Reactome" id="R-BTA-189451">
    <property type="pathway name" value="Heme biosynthesis"/>
</dbReference>
<dbReference type="Reactome" id="R-BTA-6798695">
    <property type="pathway name" value="Neutrophil degranulation"/>
</dbReference>
<dbReference type="UniPathway" id="UPA00251">
    <property type="reaction ID" value="UER00318"/>
</dbReference>
<dbReference type="Proteomes" id="UP000009136">
    <property type="component" value="Chromosome 8"/>
</dbReference>
<dbReference type="Bgee" id="ENSBTAG00000000251">
    <property type="expression patterns" value="Expressed in liver and 106 other cell types or tissues"/>
</dbReference>
<dbReference type="GO" id="GO:0005829">
    <property type="term" value="C:cytosol"/>
    <property type="evidence" value="ECO:0000318"/>
    <property type="project" value="GO_Central"/>
</dbReference>
<dbReference type="GO" id="GO:0042802">
    <property type="term" value="F:identical protein binding"/>
    <property type="evidence" value="ECO:0007669"/>
    <property type="project" value="Ensembl"/>
</dbReference>
<dbReference type="GO" id="GO:0004655">
    <property type="term" value="F:porphobilinogen synthase activity"/>
    <property type="evidence" value="ECO:0000314"/>
    <property type="project" value="CAFA"/>
</dbReference>
<dbReference type="GO" id="GO:0008270">
    <property type="term" value="F:zinc ion binding"/>
    <property type="evidence" value="ECO:0000250"/>
    <property type="project" value="UniProtKB"/>
</dbReference>
<dbReference type="GO" id="GO:0071353">
    <property type="term" value="P:cellular response to interleukin-4"/>
    <property type="evidence" value="ECO:0007669"/>
    <property type="project" value="Ensembl"/>
</dbReference>
<dbReference type="GO" id="GO:0006784">
    <property type="term" value="P:heme A biosynthetic process"/>
    <property type="evidence" value="ECO:0007669"/>
    <property type="project" value="Ensembl"/>
</dbReference>
<dbReference type="GO" id="GO:0006785">
    <property type="term" value="P:heme B biosynthetic process"/>
    <property type="evidence" value="ECO:0007669"/>
    <property type="project" value="Ensembl"/>
</dbReference>
<dbReference type="GO" id="GO:0006783">
    <property type="term" value="P:heme biosynthetic process"/>
    <property type="evidence" value="ECO:0000250"/>
    <property type="project" value="UniProtKB"/>
</dbReference>
<dbReference type="GO" id="GO:0048034">
    <property type="term" value="P:heme O biosynthetic process"/>
    <property type="evidence" value="ECO:0007669"/>
    <property type="project" value="Ensembl"/>
</dbReference>
<dbReference type="GO" id="GO:1901799">
    <property type="term" value="P:negative regulation of proteasomal protein catabolic process"/>
    <property type="evidence" value="ECO:0000314"/>
    <property type="project" value="CAFA"/>
</dbReference>
<dbReference type="GO" id="GO:0051260">
    <property type="term" value="P:protein homooligomerization"/>
    <property type="evidence" value="ECO:0007669"/>
    <property type="project" value="Ensembl"/>
</dbReference>
<dbReference type="GO" id="GO:0006782">
    <property type="term" value="P:protoporphyrinogen IX biosynthetic process"/>
    <property type="evidence" value="ECO:0007669"/>
    <property type="project" value="UniProtKB-UniPathway"/>
</dbReference>
<dbReference type="CDD" id="cd04824">
    <property type="entry name" value="eu_ALAD_PBGS_cysteine_rich"/>
    <property type="match status" value="1"/>
</dbReference>
<dbReference type="FunFam" id="3.20.20.70:FF:000048">
    <property type="entry name" value="Delta-aminolevulinic acid dehydratase"/>
    <property type="match status" value="1"/>
</dbReference>
<dbReference type="Gene3D" id="3.20.20.70">
    <property type="entry name" value="Aldolase class I"/>
    <property type="match status" value="1"/>
</dbReference>
<dbReference type="InterPro" id="IPR001731">
    <property type="entry name" value="ALAD"/>
</dbReference>
<dbReference type="InterPro" id="IPR030656">
    <property type="entry name" value="ALAD_AS"/>
</dbReference>
<dbReference type="InterPro" id="IPR013785">
    <property type="entry name" value="Aldolase_TIM"/>
</dbReference>
<dbReference type="NCBIfam" id="NF006762">
    <property type="entry name" value="PRK09283.1"/>
    <property type="match status" value="1"/>
</dbReference>
<dbReference type="PANTHER" id="PTHR11458">
    <property type="entry name" value="DELTA-AMINOLEVULINIC ACID DEHYDRATASE"/>
    <property type="match status" value="1"/>
</dbReference>
<dbReference type="PANTHER" id="PTHR11458:SF0">
    <property type="entry name" value="DELTA-AMINOLEVULINIC ACID DEHYDRATASE"/>
    <property type="match status" value="1"/>
</dbReference>
<dbReference type="Pfam" id="PF00490">
    <property type="entry name" value="ALAD"/>
    <property type="match status" value="1"/>
</dbReference>
<dbReference type="PIRSF" id="PIRSF001415">
    <property type="entry name" value="Porphbilin_synth"/>
    <property type="match status" value="1"/>
</dbReference>
<dbReference type="PRINTS" id="PR00144">
    <property type="entry name" value="DALDHYDRTASE"/>
</dbReference>
<dbReference type="SMART" id="SM01004">
    <property type="entry name" value="ALAD"/>
    <property type="match status" value="1"/>
</dbReference>
<dbReference type="SUPFAM" id="SSF51569">
    <property type="entry name" value="Aldolase"/>
    <property type="match status" value="1"/>
</dbReference>
<dbReference type="PROSITE" id="PS00169">
    <property type="entry name" value="D_ALA_DEHYDRATASE"/>
    <property type="match status" value="1"/>
</dbReference>
<protein>
    <recommendedName>
        <fullName>Delta-aminolevulinic acid dehydratase</fullName>
        <shortName>ALADH</shortName>
        <ecNumber>4.2.1.24</ecNumber>
    </recommendedName>
    <alternativeName>
        <fullName>Porphobilinogen synthase</fullName>
    </alternativeName>
</protein>
<name>HEM2_BOVIN</name>
<proteinExistence type="evidence at transcript level"/>
<accession>Q58DK5</accession>
<reference key="1">
    <citation type="journal article" date="2005" name="BMC Genomics">
        <title>Characterization of 954 bovine full-CDS cDNA sequences.</title>
        <authorList>
            <person name="Harhay G.P."/>
            <person name="Sonstegard T.S."/>
            <person name="Keele J.W."/>
            <person name="Heaton M.P."/>
            <person name="Clawson M.L."/>
            <person name="Snelling W.M."/>
            <person name="Wiedmann R.T."/>
            <person name="Van Tassell C.P."/>
            <person name="Smith T.P.L."/>
        </authorList>
    </citation>
    <scope>NUCLEOTIDE SEQUENCE [LARGE SCALE MRNA]</scope>
</reference>
<keyword id="KW-0021">Allosteric enzyme</keyword>
<keyword id="KW-0963">Cytoplasm</keyword>
<keyword id="KW-0350">Heme biosynthesis</keyword>
<keyword id="KW-0456">Lyase</keyword>
<keyword id="KW-0479">Metal-binding</keyword>
<keyword id="KW-0597">Phosphoprotein</keyword>
<keyword id="KW-0627">Porphyrin biosynthesis</keyword>
<keyword id="KW-1185">Reference proteome</keyword>
<keyword id="KW-0862">Zinc</keyword>
<gene>
    <name type="primary">ALAD</name>
</gene>
<organism>
    <name type="scientific">Bos taurus</name>
    <name type="common">Bovine</name>
    <dbReference type="NCBI Taxonomy" id="9913"/>
    <lineage>
        <taxon>Eukaryota</taxon>
        <taxon>Metazoa</taxon>
        <taxon>Chordata</taxon>
        <taxon>Craniata</taxon>
        <taxon>Vertebrata</taxon>
        <taxon>Euteleostomi</taxon>
        <taxon>Mammalia</taxon>
        <taxon>Eutheria</taxon>
        <taxon>Laurasiatheria</taxon>
        <taxon>Artiodactyla</taxon>
        <taxon>Ruminantia</taxon>
        <taxon>Pecora</taxon>
        <taxon>Bovidae</taxon>
        <taxon>Bovinae</taxon>
        <taxon>Bos</taxon>
    </lineage>
</organism>
<sequence length="329" mass="36081">MHPQSVLHSGYFHPLLRNWQTAATSLSASNLIYPIFVTDVPDDKQPIASLPGVARYGVNRLEEMLKPLVEEGLRCVLIFGVPSRVPKDERGSAADSEDSPAIEAIRLLRKNFPSLLVACDVCLCPYTSHGHCGLLSENGSFQAEESRQRLAEVALAYAKAGCQVVAPSDMMDGRVEAIKEALMAHGFGNRVSVMSYSAKFASCFYGPFRDAAQSSPAFGDRRCYQLPPGARGLALRAVDRDVREGADLLMVKPGTPYLDIVREVKNKHPELPLAVYHVSGEFAMLWHGAQAGAFDLKAAVLEVMTAFRRAGADVIITYYTPQLLQWLKE</sequence>
<comment type="function">
    <text evidence="2">Catalyzes an early step in the biosynthesis of tetrapyrroles. Binds two molecules of 5-aminolevulinate per subunit, each at a distinct site, and catalyzes their condensation to form porphobilinogen.</text>
</comment>
<comment type="catalytic activity">
    <reaction evidence="2">
        <text>2 5-aminolevulinate = porphobilinogen + 2 H2O + H(+)</text>
        <dbReference type="Rhea" id="RHEA:24064"/>
        <dbReference type="ChEBI" id="CHEBI:15377"/>
        <dbReference type="ChEBI" id="CHEBI:15378"/>
        <dbReference type="ChEBI" id="CHEBI:58126"/>
        <dbReference type="ChEBI" id="CHEBI:356416"/>
        <dbReference type="EC" id="4.2.1.24"/>
    </reaction>
</comment>
<comment type="cofactor">
    <cofactor evidence="2">
        <name>Zn(2+)</name>
        <dbReference type="ChEBI" id="CHEBI:29105"/>
    </cofactor>
    <text evidence="2">Binds 8 zinc ions per octamer. Requires four zinc ions per octamer for full catalytic activity. Can bind up to 2 zinc ions per subunit.</text>
</comment>
<comment type="activity regulation">
    <text evidence="2">Can alternate between a fully active homooctamer and a low-activity homohexamer. A bound magnesium ion may promote the assembly of the fully active homooctamer. The magnesium-binding site is absent in the low-activity homohexamer. Inhibited by compounds that favor the hexameric state. Inhibited by divalent lead ions. The lead ions partially displace the zinc cofactor.</text>
</comment>
<comment type="pathway">
    <text evidence="2">Porphyrin-containing compound metabolism; protoporphyrin-IX biosynthesis; coproporphyrinogen-III from 5-aminolevulinate: step 1/4.</text>
</comment>
<comment type="subunit">
    <text evidence="2">Homooctamer; active form. Homohexamer; low activity form.</text>
</comment>
<comment type="subcellular location">
    <subcellularLocation>
        <location evidence="1">Cytoplasm</location>
        <location evidence="1">Cytosol</location>
    </subcellularLocation>
</comment>
<comment type="similarity">
    <text evidence="3">Belongs to the ALAD family.</text>
</comment>
<feature type="chain" id="PRO_0000328038" description="Delta-aminolevulinic acid dehydratase">
    <location>
        <begin position="1"/>
        <end position="329"/>
    </location>
</feature>
<feature type="active site" description="Schiff-base intermediate with substrate" evidence="2">
    <location>
        <position position="199"/>
    </location>
</feature>
<feature type="active site" description="Schiff-base intermediate with substrate" evidence="2">
    <location>
        <position position="252"/>
    </location>
</feature>
<feature type="binding site" evidence="2">
    <location>
        <position position="122"/>
    </location>
    <ligand>
        <name>Zn(2+)</name>
        <dbReference type="ChEBI" id="CHEBI:29105"/>
        <label>1</label>
        <note>catalytic</note>
    </ligand>
</feature>
<feature type="binding site" evidence="2">
    <location>
        <position position="124"/>
    </location>
    <ligand>
        <name>Zn(2+)</name>
        <dbReference type="ChEBI" id="CHEBI:29105"/>
        <label>1</label>
        <note>catalytic</note>
    </ligand>
</feature>
<feature type="binding site" evidence="2">
    <location>
        <position position="131"/>
    </location>
    <ligand>
        <name>Zn(2+)</name>
        <dbReference type="ChEBI" id="CHEBI:29105"/>
        <label>2</label>
    </ligand>
</feature>
<feature type="binding site" evidence="2">
    <location>
        <position position="132"/>
    </location>
    <ligand>
        <name>Zn(2+)</name>
        <dbReference type="ChEBI" id="CHEBI:29105"/>
        <label>1</label>
        <note>catalytic</note>
    </ligand>
</feature>
<feature type="binding site" evidence="2">
    <location>
        <position position="209"/>
    </location>
    <ligand>
        <name>5-aminolevulinate</name>
        <dbReference type="ChEBI" id="CHEBI:356416"/>
        <label>1</label>
    </ligand>
</feature>
<feature type="binding site" evidence="2">
    <location>
        <position position="221"/>
    </location>
    <ligand>
        <name>5-aminolevulinate</name>
        <dbReference type="ChEBI" id="CHEBI:356416"/>
        <label>1</label>
    </ligand>
</feature>
<feature type="binding site" evidence="2">
    <location>
        <position position="223"/>
    </location>
    <ligand>
        <name>Zn(2+)</name>
        <dbReference type="ChEBI" id="CHEBI:29105"/>
        <label>2</label>
    </ligand>
</feature>
<feature type="binding site" evidence="2">
    <location>
        <position position="279"/>
    </location>
    <ligand>
        <name>5-aminolevulinate</name>
        <dbReference type="ChEBI" id="CHEBI:356416"/>
        <label>2</label>
    </ligand>
</feature>
<feature type="binding site" evidence="2">
    <location>
        <position position="318"/>
    </location>
    <ligand>
        <name>5-aminolevulinate</name>
        <dbReference type="ChEBI" id="CHEBI:356416"/>
        <label>2</label>
    </ligand>
</feature>
<feature type="modified residue" description="N6-succinyllysine" evidence="1">
    <location>
        <position position="199"/>
    </location>
</feature>
<feature type="modified residue" description="Phosphoserine" evidence="1">
    <location>
        <position position="215"/>
    </location>
</feature>
<feature type="modified residue" description="N6-succinyllysine" evidence="1">
    <location>
        <position position="252"/>
    </location>
</feature>